<gene>
    <name evidence="1" type="primary">xseB</name>
    <name type="ordered locus">BQ03530</name>
</gene>
<dbReference type="EC" id="3.1.11.6" evidence="1"/>
<dbReference type="EMBL" id="BX897700">
    <property type="protein sequence ID" value="CAF25853.1"/>
    <property type="molecule type" value="Genomic_DNA"/>
</dbReference>
<dbReference type="RefSeq" id="WP_011179147.1">
    <property type="nucleotide sequence ID" value="NC_005955.1"/>
</dbReference>
<dbReference type="SMR" id="Q6G0D5"/>
<dbReference type="KEGG" id="bqu:BQ03530"/>
<dbReference type="eggNOG" id="COG1722">
    <property type="taxonomic scope" value="Bacteria"/>
</dbReference>
<dbReference type="HOGENOM" id="CLU_145918_0_3_5"/>
<dbReference type="OrthoDB" id="9808145at2"/>
<dbReference type="Proteomes" id="UP000000597">
    <property type="component" value="Chromosome"/>
</dbReference>
<dbReference type="GO" id="GO:0005829">
    <property type="term" value="C:cytosol"/>
    <property type="evidence" value="ECO:0007669"/>
    <property type="project" value="TreeGrafter"/>
</dbReference>
<dbReference type="GO" id="GO:0009318">
    <property type="term" value="C:exodeoxyribonuclease VII complex"/>
    <property type="evidence" value="ECO:0007669"/>
    <property type="project" value="InterPro"/>
</dbReference>
<dbReference type="GO" id="GO:0008855">
    <property type="term" value="F:exodeoxyribonuclease VII activity"/>
    <property type="evidence" value="ECO:0007669"/>
    <property type="project" value="UniProtKB-UniRule"/>
</dbReference>
<dbReference type="GO" id="GO:0006308">
    <property type="term" value="P:DNA catabolic process"/>
    <property type="evidence" value="ECO:0007669"/>
    <property type="project" value="UniProtKB-UniRule"/>
</dbReference>
<dbReference type="Gene3D" id="1.10.287.1040">
    <property type="entry name" value="Exonuclease VII, small subunit"/>
    <property type="match status" value="1"/>
</dbReference>
<dbReference type="HAMAP" id="MF_00337">
    <property type="entry name" value="Exonuc_7_S"/>
    <property type="match status" value="1"/>
</dbReference>
<dbReference type="InterPro" id="IPR003761">
    <property type="entry name" value="Exonuc_VII_S"/>
</dbReference>
<dbReference type="InterPro" id="IPR037004">
    <property type="entry name" value="Exonuc_VII_ssu_sf"/>
</dbReference>
<dbReference type="NCBIfam" id="NF002139">
    <property type="entry name" value="PRK00977.1-3"/>
    <property type="match status" value="1"/>
</dbReference>
<dbReference type="NCBIfam" id="TIGR01280">
    <property type="entry name" value="xseB"/>
    <property type="match status" value="1"/>
</dbReference>
<dbReference type="PANTHER" id="PTHR34137">
    <property type="entry name" value="EXODEOXYRIBONUCLEASE 7 SMALL SUBUNIT"/>
    <property type="match status" value="1"/>
</dbReference>
<dbReference type="PANTHER" id="PTHR34137:SF1">
    <property type="entry name" value="EXODEOXYRIBONUCLEASE 7 SMALL SUBUNIT"/>
    <property type="match status" value="1"/>
</dbReference>
<dbReference type="Pfam" id="PF02609">
    <property type="entry name" value="Exonuc_VII_S"/>
    <property type="match status" value="1"/>
</dbReference>
<dbReference type="SUPFAM" id="SSF116842">
    <property type="entry name" value="XseB-like"/>
    <property type="match status" value="1"/>
</dbReference>
<reference key="1">
    <citation type="journal article" date="2004" name="Proc. Natl. Acad. Sci. U.S.A.">
        <title>The louse-borne human pathogen Bartonella quintana is a genomic derivative of the zoonotic agent Bartonella henselae.</title>
        <authorList>
            <person name="Alsmark U.C.M."/>
            <person name="Frank A.C."/>
            <person name="Karlberg E.O."/>
            <person name="Legault B.-A."/>
            <person name="Ardell D.H."/>
            <person name="Canbaeck B."/>
            <person name="Eriksson A.-S."/>
            <person name="Naeslund A.K."/>
            <person name="Handley S.A."/>
            <person name="Huvet M."/>
            <person name="La Scola B."/>
            <person name="Holmberg M."/>
            <person name="Andersson S.G.E."/>
        </authorList>
    </citation>
    <scope>NUCLEOTIDE SEQUENCE [LARGE SCALE GENOMIC DNA]</scope>
    <source>
        <strain>Toulouse</strain>
    </source>
</reference>
<feature type="chain" id="PRO_0000206923" description="Exodeoxyribonuclease 7 small subunit">
    <location>
        <begin position="1"/>
        <end position="84"/>
    </location>
</feature>
<name>EX7S_BARQU</name>
<keyword id="KW-0963">Cytoplasm</keyword>
<keyword id="KW-0269">Exonuclease</keyword>
<keyword id="KW-0378">Hydrolase</keyword>
<keyword id="KW-0540">Nuclease</keyword>
<comment type="function">
    <text evidence="1">Bidirectionally degrades single-stranded DNA into large acid-insoluble oligonucleotides, which are then degraded further into small acid-soluble oligonucleotides.</text>
</comment>
<comment type="catalytic activity">
    <reaction evidence="1">
        <text>Exonucleolytic cleavage in either 5'- to 3'- or 3'- to 5'-direction to yield nucleoside 5'-phosphates.</text>
        <dbReference type="EC" id="3.1.11.6"/>
    </reaction>
</comment>
<comment type="subunit">
    <text evidence="1">Heterooligomer composed of large and small subunits.</text>
</comment>
<comment type="subcellular location">
    <subcellularLocation>
        <location evidence="1">Cytoplasm</location>
    </subcellularLocation>
</comment>
<comment type="similarity">
    <text evidence="1">Belongs to the XseB family.</text>
</comment>
<accession>Q6G0D5</accession>
<proteinExistence type="inferred from homology"/>
<sequence>MKQEIQTGDITALSFEQALKQLEVIVENLERGDVPLEQSIDIYERGEALRKHCDRLLKAAEAKVEKIQLSEEGSPKGVEPLDSK</sequence>
<evidence type="ECO:0000255" key="1">
    <source>
        <dbReference type="HAMAP-Rule" id="MF_00337"/>
    </source>
</evidence>
<organism>
    <name type="scientific">Bartonella quintana (strain Toulouse)</name>
    <name type="common">Rochalimaea quintana</name>
    <dbReference type="NCBI Taxonomy" id="283165"/>
    <lineage>
        <taxon>Bacteria</taxon>
        <taxon>Pseudomonadati</taxon>
        <taxon>Pseudomonadota</taxon>
        <taxon>Alphaproteobacteria</taxon>
        <taxon>Hyphomicrobiales</taxon>
        <taxon>Bartonellaceae</taxon>
        <taxon>Bartonella</taxon>
    </lineage>
</organism>
<protein>
    <recommendedName>
        <fullName evidence="1">Exodeoxyribonuclease 7 small subunit</fullName>
        <ecNumber evidence="1">3.1.11.6</ecNumber>
    </recommendedName>
    <alternativeName>
        <fullName evidence="1">Exodeoxyribonuclease VII small subunit</fullName>
        <shortName evidence="1">Exonuclease VII small subunit</shortName>
    </alternativeName>
</protein>